<protein>
    <recommendedName>
        <fullName evidence="1">Probable GTP-binding protein EngB</fullName>
    </recommendedName>
</protein>
<accession>A8GM60</accession>
<gene>
    <name evidence="1" type="primary">engB</name>
    <name type="ordered locus">A1C_00760</name>
</gene>
<sequence length="212" mass="23781">MINNEKAVNNKRSTDGGKLFRSQVKFVAGAMNINQIPNFSLPEIAFVGKSNVGKSSLINTICNNKNLAKVSNTPGRTRQINFFNLADKLIIVDLPGYGFAHVPISVKEQWEVLISYYLRNSHNLRLVNLLIDSRRGIKENDQKVAELLLANKREFQIIFTKSDKVIDCKNLNNEVQNFLATLNYSCNVMYVSSRSKEGARALKASLAKCIKA</sequence>
<organism>
    <name type="scientific">Rickettsia akari (strain Hartford)</name>
    <dbReference type="NCBI Taxonomy" id="293614"/>
    <lineage>
        <taxon>Bacteria</taxon>
        <taxon>Pseudomonadati</taxon>
        <taxon>Pseudomonadota</taxon>
        <taxon>Alphaproteobacteria</taxon>
        <taxon>Rickettsiales</taxon>
        <taxon>Rickettsiaceae</taxon>
        <taxon>Rickettsieae</taxon>
        <taxon>Rickettsia</taxon>
        <taxon>spotted fever group</taxon>
    </lineage>
</organism>
<reference key="1">
    <citation type="submission" date="2007-09" db="EMBL/GenBank/DDBJ databases">
        <title>Complete genome sequence of Rickettsia akari.</title>
        <authorList>
            <person name="Madan A."/>
            <person name="Fahey J."/>
            <person name="Helton E."/>
            <person name="Ketteman M."/>
            <person name="Madan A."/>
            <person name="Rodrigues S."/>
            <person name="Sanchez A."/>
            <person name="Whiting M."/>
            <person name="Dasch G."/>
            <person name="Eremeeva M."/>
        </authorList>
    </citation>
    <scope>NUCLEOTIDE SEQUENCE [LARGE SCALE GENOMIC DNA]</scope>
    <source>
        <strain>Hartford</strain>
    </source>
</reference>
<evidence type="ECO:0000255" key="1">
    <source>
        <dbReference type="HAMAP-Rule" id="MF_00321"/>
    </source>
</evidence>
<dbReference type="EMBL" id="CP000847">
    <property type="protein sequence ID" value="ABV74485.1"/>
    <property type="molecule type" value="Genomic_DNA"/>
</dbReference>
<dbReference type="RefSeq" id="WP_012013355.1">
    <property type="nucleotide sequence ID" value="NC_009881.1"/>
</dbReference>
<dbReference type="SMR" id="A8GM60"/>
<dbReference type="STRING" id="293614.A1C_00760"/>
<dbReference type="KEGG" id="rak:A1C_00760"/>
<dbReference type="eggNOG" id="COG0218">
    <property type="taxonomic scope" value="Bacteria"/>
</dbReference>
<dbReference type="HOGENOM" id="CLU_033732_2_0_5"/>
<dbReference type="Proteomes" id="UP000006830">
    <property type="component" value="Chromosome"/>
</dbReference>
<dbReference type="GO" id="GO:0005525">
    <property type="term" value="F:GTP binding"/>
    <property type="evidence" value="ECO:0007669"/>
    <property type="project" value="UniProtKB-UniRule"/>
</dbReference>
<dbReference type="GO" id="GO:0046872">
    <property type="term" value="F:metal ion binding"/>
    <property type="evidence" value="ECO:0007669"/>
    <property type="project" value="UniProtKB-KW"/>
</dbReference>
<dbReference type="GO" id="GO:0000917">
    <property type="term" value="P:division septum assembly"/>
    <property type="evidence" value="ECO:0007669"/>
    <property type="project" value="UniProtKB-KW"/>
</dbReference>
<dbReference type="CDD" id="cd01876">
    <property type="entry name" value="YihA_EngB"/>
    <property type="match status" value="1"/>
</dbReference>
<dbReference type="Gene3D" id="3.40.50.300">
    <property type="entry name" value="P-loop containing nucleotide triphosphate hydrolases"/>
    <property type="match status" value="1"/>
</dbReference>
<dbReference type="HAMAP" id="MF_00321">
    <property type="entry name" value="GTPase_EngB"/>
    <property type="match status" value="1"/>
</dbReference>
<dbReference type="InterPro" id="IPR030393">
    <property type="entry name" value="G_ENGB_dom"/>
</dbReference>
<dbReference type="InterPro" id="IPR006073">
    <property type="entry name" value="GTP-bd"/>
</dbReference>
<dbReference type="InterPro" id="IPR019987">
    <property type="entry name" value="GTP-bd_ribosome_bio_YsxC"/>
</dbReference>
<dbReference type="InterPro" id="IPR027417">
    <property type="entry name" value="P-loop_NTPase"/>
</dbReference>
<dbReference type="NCBIfam" id="TIGR03598">
    <property type="entry name" value="GTPase_YsxC"/>
    <property type="match status" value="1"/>
</dbReference>
<dbReference type="PANTHER" id="PTHR11649:SF13">
    <property type="entry name" value="ENGB-TYPE G DOMAIN-CONTAINING PROTEIN"/>
    <property type="match status" value="1"/>
</dbReference>
<dbReference type="PANTHER" id="PTHR11649">
    <property type="entry name" value="MSS1/TRME-RELATED GTP-BINDING PROTEIN"/>
    <property type="match status" value="1"/>
</dbReference>
<dbReference type="Pfam" id="PF01926">
    <property type="entry name" value="MMR_HSR1"/>
    <property type="match status" value="1"/>
</dbReference>
<dbReference type="SUPFAM" id="SSF52540">
    <property type="entry name" value="P-loop containing nucleoside triphosphate hydrolases"/>
    <property type="match status" value="1"/>
</dbReference>
<dbReference type="PROSITE" id="PS51706">
    <property type="entry name" value="G_ENGB"/>
    <property type="match status" value="1"/>
</dbReference>
<feature type="chain" id="PRO_1000005847" description="Probable GTP-binding protein EngB">
    <location>
        <begin position="1"/>
        <end position="212"/>
    </location>
</feature>
<feature type="domain" description="EngB-type G" evidence="1">
    <location>
        <begin position="40"/>
        <end position="212"/>
    </location>
</feature>
<feature type="binding site" evidence="1">
    <location>
        <begin position="48"/>
        <end position="55"/>
    </location>
    <ligand>
        <name>GTP</name>
        <dbReference type="ChEBI" id="CHEBI:37565"/>
    </ligand>
</feature>
<feature type="binding site" evidence="1">
    <location>
        <position position="55"/>
    </location>
    <ligand>
        <name>Mg(2+)</name>
        <dbReference type="ChEBI" id="CHEBI:18420"/>
    </ligand>
</feature>
<feature type="binding site" evidence="1">
    <location>
        <begin position="75"/>
        <end position="79"/>
    </location>
    <ligand>
        <name>GTP</name>
        <dbReference type="ChEBI" id="CHEBI:37565"/>
    </ligand>
</feature>
<feature type="binding site" evidence="1">
    <location>
        <position position="77"/>
    </location>
    <ligand>
        <name>Mg(2+)</name>
        <dbReference type="ChEBI" id="CHEBI:18420"/>
    </ligand>
</feature>
<feature type="binding site" evidence="1">
    <location>
        <begin position="93"/>
        <end position="96"/>
    </location>
    <ligand>
        <name>GTP</name>
        <dbReference type="ChEBI" id="CHEBI:37565"/>
    </ligand>
</feature>
<feature type="binding site" evidence="1">
    <location>
        <begin position="160"/>
        <end position="163"/>
    </location>
    <ligand>
        <name>GTP</name>
        <dbReference type="ChEBI" id="CHEBI:37565"/>
    </ligand>
</feature>
<feature type="binding site" evidence="1">
    <location>
        <begin position="191"/>
        <end position="193"/>
    </location>
    <ligand>
        <name>GTP</name>
        <dbReference type="ChEBI" id="CHEBI:37565"/>
    </ligand>
</feature>
<keyword id="KW-0131">Cell cycle</keyword>
<keyword id="KW-0132">Cell division</keyword>
<keyword id="KW-0342">GTP-binding</keyword>
<keyword id="KW-0460">Magnesium</keyword>
<keyword id="KW-0479">Metal-binding</keyword>
<keyword id="KW-0547">Nucleotide-binding</keyword>
<keyword id="KW-0717">Septation</keyword>
<proteinExistence type="inferred from homology"/>
<comment type="function">
    <text evidence="1">Necessary for normal cell division and for the maintenance of normal septation.</text>
</comment>
<comment type="cofactor">
    <cofactor evidence="1">
        <name>Mg(2+)</name>
        <dbReference type="ChEBI" id="CHEBI:18420"/>
    </cofactor>
</comment>
<comment type="similarity">
    <text evidence="1">Belongs to the TRAFAC class TrmE-Era-EngA-EngB-Septin-like GTPase superfamily. EngB GTPase family.</text>
</comment>
<name>ENGB_RICAH</name>